<feature type="signal peptide" evidence="2">
    <location>
        <begin position="1"/>
        <end position="25"/>
    </location>
</feature>
<feature type="chain" id="PRO_0000152776" description="Insulin-like growth factor-binding protein 6">
    <location>
        <begin position="26"/>
        <end position="237"/>
    </location>
</feature>
<feature type="domain" description="IGFBP N-terminal" evidence="4">
    <location>
        <begin position="26"/>
        <end position="105"/>
    </location>
</feature>
<feature type="domain" description="Thyroglobulin type-1" evidence="3">
    <location>
        <begin position="156"/>
        <end position="231"/>
    </location>
</feature>
<feature type="region of interest" description="Disordered" evidence="5">
    <location>
        <begin position="101"/>
        <end position="158"/>
    </location>
</feature>
<feature type="region of interest" description="Disordered" evidence="5">
    <location>
        <begin position="215"/>
        <end position="237"/>
    </location>
</feature>
<feature type="compositionally biased region" description="Polar residues" evidence="5">
    <location>
        <begin position="135"/>
        <end position="151"/>
    </location>
</feature>
<feature type="disulfide bond" evidence="4">
    <location>
        <begin position="27"/>
        <end position="30"/>
    </location>
</feature>
<feature type="disulfide bond" evidence="4">
    <location>
        <begin position="38"/>
        <end position="42"/>
    </location>
</feature>
<feature type="disulfide bond" evidence="4">
    <location>
        <begin position="55"/>
        <end position="61"/>
    </location>
</feature>
<feature type="disulfide bond" evidence="4">
    <location>
        <begin position="69"/>
        <end position="82"/>
    </location>
</feature>
<feature type="disulfide bond" evidence="4">
    <location>
        <begin position="76"/>
        <end position="102"/>
    </location>
</feature>
<feature type="disulfide bond" evidence="3">
    <location>
        <begin position="159"/>
        <end position="186"/>
    </location>
</feature>
<feature type="disulfide bond" evidence="3">
    <location>
        <begin position="197"/>
        <end position="208"/>
    </location>
</feature>
<feature type="disulfide bond" evidence="3">
    <location>
        <begin position="210"/>
        <end position="231"/>
    </location>
</feature>
<feature type="sequence conflict" description="In Ref. 1; AAI10142." evidence="6" ref="1">
    <original>H</original>
    <variation>Q</variation>
    <location>
        <position position="188"/>
    </location>
</feature>
<dbReference type="EMBL" id="BC110141">
    <property type="protein sequence ID" value="AAI10142.1"/>
    <property type="molecule type" value="mRNA"/>
</dbReference>
<dbReference type="EMBL" id="S52774">
    <property type="protein sequence ID" value="AAB24875.2"/>
    <property type="molecule type" value="mRNA"/>
</dbReference>
<dbReference type="EMBL" id="AY197339">
    <property type="protein sequence ID" value="AAO45612.1"/>
    <property type="molecule type" value="Genomic_DNA"/>
</dbReference>
<dbReference type="PIR" id="C45403">
    <property type="entry name" value="C45403"/>
</dbReference>
<dbReference type="PIR" id="T01404">
    <property type="entry name" value="T01404"/>
</dbReference>
<dbReference type="RefSeq" id="NP_001035585.1">
    <property type="nucleotide sequence ID" value="NM_001040495.2"/>
</dbReference>
<dbReference type="SMR" id="Q05718"/>
<dbReference type="FunCoup" id="Q05718">
    <property type="interactions" value="119"/>
</dbReference>
<dbReference type="STRING" id="9913.ENSBTAP00000060717"/>
<dbReference type="MEROPS" id="I31.952"/>
<dbReference type="PaxDb" id="9913-ENSBTAP00000028615"/>
<dbReference type="GeneID" id="404186"/>
<dbReference type="KEGG" id="bta:404186"/>
<dbReference type="CTD" id="3489"/>
<dbReference type="eggNOG" id="ENOG502QV3Q">
    <property type="taxonomic scope" value="Eukaryota"/>
</dbReference>
<dbReference type="InParanoid" id="Q05718"/>
<dbReference type="OrthoDB" id="8875634at2759"/>
<dbReference type="Proteomes" id="UP000009136">
    <property type="component" value="Unplaced"/>
</dbReference>
<dbReference type="GO" id="GO:0005615">
    <property type="term" value="C:extracellular space"/>
    <property type="evidence" value="ECO:0000318"/>
    <property type="project" value="GO_Central"/>
</dbReference>
<dbReference type="GO" id="GO:0001968">
    <property type="term" value="F:fibronectin binding"/>
    <property type="evidence" value="ECO:0000318"/>
    <property type="project" value="GO_Central"/>
</dbReference>
<dbReference type="GO" id="GO:0031994">
    <property type="term" value="F:insulin-like growth factor I binding"/>
    <property type="evidence" value="ECO:0000318"/>
    <property type="project" value="GO_Central"/>
</dbReference>
<dbReference type="GO" id="GO:0031995">
    <property type="term" value="F:insulin-like growth factor II binding"/>
    <property type="evidence" value="ECO:0000318"/>
    <property type="project" value="GO_Central"/>
</dbReference>
<dbReference type="GO" id="GO:0016477">
    <property type="term" value="P:cell migration"/>
    <property type="evidence" value="ECO:0000250"/>
    <property type="project" value="UniProtKB"/>
</dbReference>
<dbReference type="GO" id="GO:0043410">
    <property type="term" value="P:positive regulation of MAPK cascade"/>
    <property type="evidence" value="ECO:0000250"/>
    <property type="project" value="UniProtKB"/>
</dbReference>
<dbReference type="GO" id="GO:0043567">
    <property type="term" value="P:regulation of insulin-like growth factor receptor signaling pathway"/>
    <property type="evidence" value="ECO:0000318"/>
    <property type="project" value="GO_Central"/>
</dbReference>
<dbReference type="CDD" id="cd00191">
    <property type="entry name" value="TY"/>
    <property type="match status" value="1"/>
</dbReference>
<dbReference type="FunFam" id="4.10.800.10:FF:000010">
    <property type="entry name" value="Insulin-like growth factor binding protein 6"/>
    <property type="match status" value="1"/>
</dbReference>
<dbReference type="FunFam" id="4.10.40.20:FF:000011">
    <property type="entry name" value="insulin-like growth factor-binding protein 6 isoform X1"/>
    <property type="match status" value="1"/>
</dbReference>
<dbReference type="Gene3D" id="4.10.40.20">
    <property type="match status" value="1"/>
</dbReference>
<dbReference type="Gene3D" id="4.10.800.10">
    <property type="entry name" value="Thyroglobulin type-1"/>
    <property type="match status" value="1"/>
</dbReference>
<dbReference type="InterPro" id="IPR009030">
    <property type="entry name" value="Growth_fac_rcpt_cys_sf"/>
</dbReference>
<dbReference type="InterPro" id="IPR022326">
    <property type="entry name" value="IGFBP-6"/>
</dbReference>
<dbReference type="InterPro" id="IPR000867">
    <property type="entry name" value="IGFBP-like"/>
</dbReference>
<dbReference type="InterPro" id="IPR022321">
    <property type="entry name" value="IGFBP_1-6_chordata"/>
</dbReference>
<dbReference type="InterPro" id="IPR000716">
    <property type="entry name" value="Thyroglobulin_1"/>
</dbReference>
<dbReference type="InterPro" id="IPR036857">
    <property type="entry name" value="Thyroglobulin_1_sf"/>
</dbReference>
<dbReference type="PANTHER" id="PTHR11551">
    <property type="entry name" value="INSULIN-LIKE GROWTH FACTOR BINDING PROTEIN"/>
    <property type="match status" value="1"/>
</dbReference>
<dbReference type="PANTHER" id="PTHR11551:SF14">
    <property type="entry name" value="INSULIN-LIKE GROWTH FACTOR-BINDING PROTEIN 6"/>
    <property type="match status" value="1"/>
</dbReference>
<dbReference type="Pfam" id="PF00086">
    <property type="entry name" value="Thyroglobulin_1"/>
    <property type="match status" value="1"/>
</dbReference>
<dbReference type="PRINTS" id="PR01976">
    <property type="entry name" value="IGFBPFAMILY"/>
</dbReference>
<dbReference type="PRINTS" id="PR01982">
    <property type="entry name" value="IGFBPFAMILY6"/>
</dbReference>
<dbReference type="SMART" id="SM00121">
    <property type="entry name" value="IB"/>
    <property type="match status" value="1"/>
</dbReference>
<dbReference type="SMART" id="SM00211">
    <property type="entry name" value="TY"/>
    <property type="match status" value="1"/>
</dbReference>
<dbReference type="SUPFAM" id="SSF57184">
    <property type="entry name" value="Growth factor receptor domain"/>
    <property type="match status" value="1"/>
</dbReference>
<dbReference type="SUPFAM" id="SSF57610">
    <property type="entry name" value="Thyroglobulin type-1 domain"/>
    <property type="match status" value="1"/>
</dbReference>
<dbReference type="PROSITE" id="PS51323">
    <property type="entry name" value="IGFBP_N_2"/>
    <property type="match status" value="1"/>
</dbReference>
<dbReference type="PROSITE" id="PS00484">
    <property type="entry name" value="THYROGLOBULIN_1_1"/>
    <property type="match status" value="1"/>
</dbReference>
<dbReference type="PROSITE" id="PS51162">
    <property type="entry name" value="THYROGLOBULIN_1_2"/>
    <property type="match status" value="1"/>
</dbReference>
<comment type="function">
    <text evidence="1">IGF-binding proteins prolong the half-life of the IGFs and have been shown to either inhibit or stimulate the growth promoting effects of the IGFs on cell culture. They alter the interaction of IGFs with their cell surface receptors. Activates the MAPK signaling pathway and induces cell migration.</text>
</comment>
<comment type="subunit">
    <text evidence="1">Interacts (via C-terminal domain) with PHB2.</text>
</comment>
<comment type="subcellular location">
    <subcellularLocation>
        <location>Secreted</location>
    </subcellularLocation>
</comment>
<comment type="PTM">
    <text evidence="6">O-glycosylated.</text>
</comment>
<reference key="1">
    <citation type="submission" date="2005-11" db="EMBL/GenBank/DDBJ databases">
        <authorList>
            <consortium name="NIH - Mammalian Gene Collection (MGC) project"/>
        </authorList>
    </citation>
    <scope>NUCLEOTIDE SEQUENCE [LARGE SCALE MRNA]</scope>
    <source>
        <strain>Crossbred X Angus</strain>
        <tissue>Liver</tissue>
    </source>
</reference>
<reference key="2">
    <citation type="journal article" date="1992" name="Mol. Endocrinol.">
        <title>Endothelial cells express insulin-like growth factor-binding proteins 2 to 6.</title>
        <authorList>
            <person name="Moser D.R."/>
            <person name="Lowe W.L. Jr."/>
            <person name="Dake B.L."/>
            <person name="Booth B.A."/>
            <person name="Boes M."/>
            <person name="Clemmons D.R."/>
            <person name="Bar R.S."/>
        </authorList>
    </citation>
    <scope>NUCLEOTIDE SEQUENCE [MRNA] OF 84-205</scope>
</reference>
<reference key="3">
    <citation type="journal article" date="2003" name="Genet. Mol. Res.">
        <title>Molecular cytogenetic assignment of genes to bovine chromosome 5.</title>
        <authorList>
            <person name="De Donato M."/>
            <person name="Gallagher D.S. Jr."/>
            <person name="Lehn C."/>
            <person name="Gill C."/>
            <person name="Taylor J.F."/>
        </authorList>
    </citation>
    <scope>NUCLEOTIDE SEQUENCE [GENOMIC DNA] OF 110-191</scope>
</reference>
<sequence>MTPHRLLPPLLLTLLLAARPGGALARCPGCGQGVSAGCPGGCAEEEDGGPAAEGCAEAGGCLRREGQQCGVYTPNCAPGLQCQPPEKEDLPLRALLQGRGRCGRARTPSGENPKESKPQAGTARSQDVNRRDQQRNSGTSTTPSRSNSGGVQDTEMGPCRKHLDSVLQQLQTEVFRGAHTLYVPNCDHRGFYRKRQCRSSQGQRRGPCWCVERMGQPLPGSSEGGDGSSLCPTGSSG</sequence>
<protein>
    <recommendedName>
        <fullName>Insulin-like growth factor-binding protein 6</fullName>
        <shortName>IBP-6</shortName>
        <shortName>IGF-binding protein 6</shortName>
        <shortName>IGFBP-6</shortName>
    </recommendedName>
</protein>
<accession>Q05718</accession>
<accession>Q2YDN5</accession>
<accession>Q865L3</accession>
<proteinExistence type="evidence at transcript level"/>
<evidence type="ECO:0000250" key="1">
    <source>
        <dbReference type="UniProtKB" id="P24592"/>
    </source>
</evidence>
<evidence type="ECO:0000255" key="2"/>
<evidence type="ECO:0000255" key="3">
    <source>
        <dbReference type="PROSITE-ProRule" id="PRU00500"/>
    </source>
</evidence>
<evidence type="ECO:0000255" key="4">
    <source>
        <dbReference type="PROSITE-ProRule" id="PRU00653"/>
    </source>
</evidence>
<evidence type="ECO:0000256" key="5">
    <source>
        <dbReference type="SAM" id="MobiDB-lite"/>
    </source>
</evidence>
<evidence type="ECO:0000305" key="6"/>
<organism>
    <name type="scientific">Bos taurus</name>
    <name type="common">Bovine</name>
    <dbReference type="NCBI Taxonomy" id="9913"/>
    <lineage>
        <taxon>Eukaryota</taxon>
        <taxon>Metazoa</taxon>
        <taxon>Chordata</taxon>
        <taxon>Craniata</taxon>
        <taxon>Vertebrata</taxon>
        <taxon>Euteleostomi</taxon>
        <taxon>Mammalia</taxon>
        <taxon>Eutheria</taxon>
        <taxon>Laurasiatheria</taxon>
        <taxon>Artiodactyla</taxon>
        <taxon>Ruminantia</taxon>
        <taxon>Pecora</taxon>
        <taxon>Bovidae</taxon>
        <taxon>Bovinae</taxon>
        <taxon>Bos</taxon>
    </lineage>
</organism>
<name>IBP6_BOVIN</name>
<gene>
    <name type="primary">IGFBP6</name>
</gene>
<keyword id="KW-1015">Disulfide bond</keyword>
<keyword id="KW-0325">Glycoprotein</keyword>
<keyword id="KW-0340">Growth factor binding</keyword>
<keyword id="KW-1185">Reference proteome</keyword>
<keyword id="KW-0964">Secreted</keyword>
<keyword id="KW-0732">Signal</keyword>